<accession>Q3KLQ8</accession>
<reference key="1">
    <citation type="journal article" date="2005" name="Infect. Immun.">
        <title>Comparative genomic analysis of Chlamydia trachomatis oculotropic and genitotropic strains.</title>
        <authorList>
            <person name="Carlson J.H."/>
            <person name="Porcella S.F."/>
            <person name="McClarty G."/>
            <person name="Caldwell H.D."/>
        </authorList>
    </citation>
    <scope>NUCLEOTIDE SEQUENCE [LARGE SCALE GENOMIC DNA]</scope>
    <source>
        <strain>ATCC VR-571B / DSM 19440 / HAR-13</strain>
    </source>
</reference>
<organism>
    <name type="scientific">Chlamydia trachomatis serovar A (strain ATCC VR-571B / DSM 19440 / HAR-13)</name>
    <dbReference type="NCBI Taxonomy" id="315277"/>
    <lineage>
        <taxon>Bacteria</taxon>
        <taxon>Pseudomonadati</taxon>
        <taxon>Chlamydiota</taxon>
        <taxon>Chlamydiia</taxon>
        <taxon>Chlamydiales</taxon>
        <taxon>Chlamydiaceae</taxon>
        <taxon>Chlamydia/Chlamydophila group</taxon>
        <taxon>Chlamydia</taxon>
    </lineage>
</organism>
<protein>
    <recommendedName>
        <fullName>Sulfur-rich protein</fullName>
    </recommendedName>
    <alternativeName>
        <fullName>Cysteine-rich protein A</fullName>
    </alternativeName>
</protein>
<gene>
    <name type="primary">srp</name>
    <name type="synonym">crpA</name>
    <name type="ordered locus">CTA_0482</name>
</gene>
<name>SRP_CHLTA</name>
<proteinExistence type="inferred from homology"/>
<comment type="subcellular location">
    <subcellularLocation>
        <location evidence="4">Membrane</location>
        <topology evidence="4">Multi-pass membrane protein</topology>
    </subcellularLocation>
    <text evidence="1">Immunolocalizes to the inclusion membrane, the membrane that surrounds the intracellular parasite. This protein is recognized by CD8+ T-cells in both human and mouse infections, suggesting it gains access to the host cytoplasm.</text>
</comment>
<sequence length="152" mass="16133">MSTVPVVQGAGSSNSAQDISTSSAPLTLKERISNLLSSTAFKVGLVVIGLLLVIATLIFLVSAASFVNAIYLVAIPAILGCVNICVGILSMEGHCSPERWILCKKVLKTSEDIIDDGQINNSNKVFTDERLNAIDGVVESLSRRNSLVDQTQ</sequence>
<feature type="chain" id="PRO_0000248633" description="Sulfur-rich protein">
    <location>
        <begin position="1"/>
        <end position="152"/>
    </location>
</feature>
<feature type="transmembrane region" description="Helical" evidence="2">
    <location>
        <begin position="43"/>
        <end position="63"/>
    </location>
</feature>
<feature type="transmembrane region" description="Helical" evidence="2">
    <location>
        <begin position="69"/>
        <end position="89"/>
    </location>
</feature>
<feature type="region of interest" description="Disordered" evidence="3">
    <location>
        <begin position="1"/>
        <end position="20"/>
    </location>
</feature>
<dbReference type="EMBL" id="CP000051">
    <property type="protein sequence ID" value="AAX50714.1"/>
    <property type="molecule type" value="Genomic_DNA"/>
</dbReference>
<dbReference type="RefSeq" id="WP_011324736.1">
    <property type="nucleotide sequence ID" value="NC_007429.1"/>
</dbReference>
<dbReference type="SMR" id="Q3KLQ8"/>
<dbReference type="KEGG" id="cta:CTA_0482"/>
<dbReference type="HOGENOM" id="CLU_1737288_0_0_0"/>
<dbReference type="Proteomes" id="UP000002532">
    <property type="component" value="Chromosome"/>
</dbReference>
<dbReference type="GO" id="GO:0019867">
    <property type="term" value="C:outer membrane"/>
    <property type="evidence" value="ECO:0007669"/>
    <property type="project" value="InterPro"/>
</dbReference>
<dbReference type="InterPro" id="IPR008436">
    <property type="entry name" value="CRPA"/>
</dbReference>
<dbReference type="Pfam" id="PF05745">
    <property type="entry name" value="CRPA"/>
    <property type="match status" value="1"/>
</dbReference>
<evidence type="ECO:0000250" key="1"/>
<evidence type="ECO:0000255" key="2"/>
<evidence type="ECO:0000256" key="3">
    <source>
        <dbReference type="SAM" id="MobiDB-lite"/>
    </source>
</evidence>
<evidence type="ECO:0000305" key="4"/>
<keyword id="KW-0472">Membrane</keyword>
<keyword id="KW-0812">Transmembrane</keyword>
<keyword id="KW-1133">Transmembrane helix</keyword>